<evidence type="ECO:0000305" key="1">
    <source>
    </source>
</evidence>
<protein>
    <recommendedName>
        <fullName>Putative uncharacterized protein YHR212C</fullName>
    </recommendedName>
</protein>
<name>YH212_YEAST</name>
<proteinExistence type="uncertain"/>
<dbReference type="EMBL" id="U00029">
    <property type="protein sequence ID" value="AAB69738.1"/>
    <property type="molecule type" value="Genomic_DNA"/>
</dbReference>
<dbReference type="EMBL" id="AY693250">
    <property type="protein sequence ID" value="AAT93269.1"/>
    <property type="molecule type" value="Genomic_DNA"/>
</dbReference>
<dbReference type="PIR" id="S48993">
    <property type="entry name" value="S48993"/>
</dbReference>
<dbReference type="EnsemblFungi" id="YAR060C_mRNA">
    <property type="protein sequence ID" value="YAR060C"/>
    <property type="gene ID" value="YAR060C"/>
</dbReference>
<dbReference type="EnsemblFungi" id="YHR212C_mRNA">
    <property type="protein sequence ID" value="YHR212C"/>
    <property type="gene ID" value="YHR212C"/>
</dbReference>
<dbReference type="AGR" id="SGD:S000001255"/>
<dbReference type="SGD" id="S000001255">
    <property type="gene designation" value="YHR212C"/>
</dbReference>
<dbReference type="GeneTree" id="ENSGT00940000181373"/>
<dbReference type="HOGENOM" id="CLU_2160369_0_0_1"/>
<dbReference type="ExpressionAtlas" id="P0CX89">
    <property type="expression patterns" value="baseline"/>
</dbReference>
<feature type="chain" id="PRO_0000410449" description="Putative uncharacterized protein YHR212C">
    <location>
        <begin position="1"/>
        <end position="111"/>
    </location>
</feature>
<sequence length="111" mass="12860">MSKTDVKKSREASGILTLQVNLRERRNFLNLMQNKLFSWKIRFSAIKGKCSQKSKYFRRSRSEDCYVEADLKILSRTRRSRKLPGTVPDFLGKQLIGISSSVVSRVSRSCR</sequence>
<organism>
    <name type="scientific">Saccharomyces cerevisiae (strain ATCC 204508 / S288c)</name>
    <name type="common">Baker's yeast</name>
    <dbReference type="NCBI Taxonomy" id="559292"/>
    <lineage>
        <taxon>Eukaryota</taxon>
        <taxon>Fungi</taxon>
        <taxon>Dikarya</taxon>
        <taxon>Ascomycota</taxon>
        <taxon>Saccharomycotina</taxon>
        <taxon>Saccharomycetes</taxon>
        <taxon>Saccharomycetales</taxon>
        <taxon>Saccharomycetaceae</taxon>
        <taxon>Saccharomyces</taxon>
    </lineage>
</organism>
<gene>
    <name type="ordered locus">YHR212C</name>
</gene>
<accession>P0CX89</accession>
<accession>P38895</accession>
<reference key="1">
    <citation type="journal article" date="1994" name="Science">
        <title>Complete nucleotide sequence of Saccharomyces cerevisiae chromosome VIII.</title>
        <authorList>
            <person name="Johnston M."/>
            <person name="Andrews S."/>
            <person name="Brinkman R."/>
            <person name="Cooper J."/>
            <person name="Ding H."/>
            <person name="Dover J."/>
            <person name="Du Z."/>
            <person name="Favello A."/>
            <person name="Fulton L."/>
            <person name="Gattung S."/>
            <person name="Geisel C."/>
            <person name="Kirsten J."/>
            <person name="Kucaba T."/>
            <person name="Hillier L.W."/>
            <person name="Jier M."/>
            <person name="Johnston L."/>
            <person name="Langston Y."/>
            <person name="Latreille P."/>
            <person name="Louis E.J."/>
            <person name="Macri C."/>
            <person name="Mardis E."/>
            <person name="Menezes S."/>
            <person name="Mouser L."/>
            <person name="Nhan M."/>
            <person name="Rifkin L."/>
            <person name="Riles L."/>
            <person name="St Peter H."/>
            <person name="Trevaskis E."/>
            <person name="Vaughan K."/>
            <person name="Vignati D."/>
            <person name="Wilcox L."/>
            <person name="Wohldman P."/>
            <person name="Waterston R."/>
            <person name="Wilson R."/>
            <person name="Vaudin M."/>
        </authorList>
    </citation>
    <scope>NUCLEOTIDE SEQUENCE [LARGE SCALE GENOMIC DNA]</scope>
    <source>
        <strain>ATCC 204508 / S288c</strain>
    </source>
</reference>
<reference key="2">
    <citation type="journal article" date="2014" name="G3 (Bethesda)">
        <title>The reference genome sequence of Saccharomyces cerevisiae: Then and now.</title>
        <authorList>
            <person name="Engel S.R."/>
            <person name="Dietrich F.S."/>
            <person name="Fisk D.G."/>
            <person name="Binkley G."/>
            <person name="Balakrishnan R."/>
            <person name="Costanzo M.C."/>
            <person name="Dwight S.S."/>
            <person name="Hitz B.C."/>
            <person name="Karra K."/>
            <person name="Nash R.S."/>
            <person name="Weng S."/>
            <person name="Wong E.D."/>
            <person name="Lloyd P."/>
            <person name="Skrzypek M.S."/>
            <person name="Miyasato S.R."/>
            <person name="Simison M."/>
            <person name="Cherry J.M."/>
        </authorList>
    </citation>
    <scope>GENOME REANNOTATION</scope>
    <source>
        <strain>ATCC 204508 / S288c</strain>
    </source>
</reference>
<reference key="3">
    <citation type="journal article" date="2007" name="Genome Res.">
        <title>Approaching a complete repository of sequence-verified protein-encoding clones for Saccharomyces cerevisiae.</title>
        <authorList>
            <person name="Hu Y."/>
            <person name="Rolfs A."/>
            <person name="Bhullar B."/>
            <person name="Murthy T.V.S."/>
            <person name="Zhu C."/>
            <person name="Berger M.F."/>
            <person name="Camargo A.A."/>
            <person name="Kelley F."/>
            <person name="McCarron S."/>
            <person name="Jepson D."/>
            <person name="Richardson A."/>
            <person name="Raphael J."/>
            <person name="Moreira D."/>
            <person name="Taycher E."/>
            <person name="Zuo D."/>
            <person name="Mohr S."/>
            <person name="Kane M.F."/>
            <person name="Williamson J."/>
            <person name="Simpson A.J.G."/>
            <person name="Bulyk M.L."/>
            <person name="Harlow E."/>
            <person name="Marsischky G."/>
            <person name="Kolodner R.D."/>
            <person name="LaBaer J."/>
        </authorList>
    </citation>
    <scope>NUCLEOTIDE SEQUENCE [GENOMIC DNA]</scope>
    <source>
        <strain>ATCC 204508 / S288c</strain>
    </source>
</reference>
<comment type="caution">
    <text evidence="1">Product of a dubious gene prediction unlikely to encode a functional protein. Because of that it is not part of the S.cerevisiae S288c complete/reference proteome set.</text>
</comment>